<name>TILS_TREPS</name>
<accession>B2S2X0</accession>
<proteinExistence type="inferred from homology"/>
<keyword id="KW-0067">ATP-binding</keyword>
<keyword id="KW-0963">Cytoplasm</keyword>
<keyword id="KW-0436">Ligase</keyword>
<keyword id="KW-0547">Nucleotide-binding</keyword>
<keyword id="KW-0819">tRNA processing</keyword>
<dbReference type="EC" id="6.3.4.19" evidence="1"/>
<dbReference type="EMBL" id="CP000805">
    <property type="protein sequence ID" value="ACD70799.1"/>
    <property type="molecule type" value="Genomic_DNA"/>
</dbReference>
<dbReference type="RefSeq" id="WP_010881821.1">
    <property type="nucleotide sequence ID" value="NC_021508.1"/>
</dbReference>
<dbReference type="SMR" id="B2S2X0"/>
<dbReference type="GeneID" id="93876150"/>
<dbReference type="KEGG" id="tpp:TPASS_0373"/>
<dbReference type="PATRIC" id="fig|455434.6.peg.376"/>
<dbReference type="Proteomes" id="UP000001202">
    <property type="component" value="Chromosome"/>
</dbReference>
<dbReference type="GO" id="GO:0005737">
    <property type="term" value="C:cytoplasm"/>
    <property type="evidence" value="ECO:0007669"/>
    <property type="project" value="UniProtKB-SubCell"/>
</dbReference>
<dbReference type="GO" id="GO:0005524">
    <property type="term" value="F:ATP binding"/>
    <property type="evidence" value="ECO:0007669"/>
    <property type="project" value="UniProtKB-UniRule"/>
</dbReference>
<dbReference type="GO" id="GO:0032267">
    <property type="term" value="F:tRNA(Ile)-lysidine synthase activity"/>
    <property type="evidence" value="ECO:0007669"/>
    <property type="project" value="UniProtKB-EC"/>
</dbReference>
<dbReference type="GO" id="GO:0006400">
    <property type="term" value="P:tRNA modification"/>
    <property type="evidence" value="ECO:0007669"/>
    <property type="project" value="UniProtKB-UniRule"/>
</dbReference>
<dbReference type="CDD" id="cd01992">
    <property type="entry name" value="TilS_N"/>
    <property type="match status" value="1"/>
</dbReference>
<dbReference type="Gene3D" id="3.40.50.620">
    <property type="entry name" value="HUPs"/>
    <property type="match status" value="1"/>
</dbReference>
<dbReference type="HAMAP" id="MF_01161">
    <property type="entry name" value="tRNA_Ile_lys_synt"/>
    <property type="match status" value="1"/>
</dbReference>
<dbReference type="InterPro" id="IPR012796">
    <property type="entry name" value="Lysidine-tRNA-synth_C"/>
</dbReference>
<dbReference type="InterPro" id="IPR014729">
    <property type="entry name" value="Rossmann-like_a/b/a_fold"/>
</dbReference>
<dbReference type="InterPro" id="IPR011063">
    <property type="entry name" value="TilS/TtcA_N"/>
</dbReference>
<dbReference type="InterPro" id="IPR012094">
    <property type="entry name" value="tRNA_Ile_lys_synt"/>
</dbReference>
<dbReference type="InterPro" id="IPR012795">
    <property type="entry name" value="tRNA_Ile_lys_synt_N"/>
</dbReference>
<dbReference type="NCBIfam" id="TIGR02433">
    <property type="entry name" value="lysidine_TilS_C"/>
    <property type="match status" value="1"/>
</dbReference>
<dbReference type="NCBIfam" id="TIGR02432">
    <property type="entry name" value="lysidine_TilS_N"/>
    <property type="match status" value="1"/>
</dbReference>
<dbReference type="PANTHER" id="PTHR43033">
    <property type="entry name" value="TRNA(ILE)-LYSIDINE SYNTHASE-RELATED"/>
    <property type="match status" value="1"/>
</dbReference>
<dbReference type="PANTHER" id="PTHR43033:SF1">
    <property type="entry name" value="TRNA(ILE)-LYSIDINE SYNTHASE-RELATED"/>
    <property type="match status" value="1"/>
</dbReference>
<dbReference type="Pfam" id="PF01171">
    <property type="entry name" value="ATP_bind_3"/>
    <property type="match status" value="1"/>
</dbReference>
<dbReference type="SUPFAM" id="SSF52402">
    <property type="entry name" value="Adenine nucleotide alpha hydrolases-like"/>
    <property type="match status" value="1"/>
</dbReference>
<dbReference type="SUPFAM" id="SSF56037">
    <property type="entry name" value="PheT/TilS domain"/>
    <property type="match status" value="1"/>
</dbReference>
<feature type="chain" id="PRO_1000137884" description="tRNA(Ile)-lysidine synthase">
    <location>
        <begin position="1"/>
        <end position="477"/>
    </location>
</feature>
<feature type="binding site" evidence="1">
    <location>
        <begin position="36"/>
        <end position="41"/>
    </location>
    <ligand>
        <name>ATP</name>
        <dbReference type="ChEBI" id="CHEBI:30616"/>
    </ligand>
</feature>
<gene>
    <name evidence="1" type="primary">tilS</name>
    <name type="ordered locus">TPASS_0373</name>
</gene>
<comment type="function">
    <text evidence="1">Ligates lysine onto the cytidine present at position 34 of the AUA codon-specific tRNA(Ile) that contains the anticodon CAU, in an ATP-dependent manner. Cytidine is converted to lysidine, thus changing the amino acid specificity of the tRNA from methionine to isoleucine.</text>
</comment>
<comment type="catalytic activity">
    <reaction evidence="1">
        <text>cytidine(34) in tRNA(Ile2) + L-lysine + ATP = lysidine(34) in tRNA(Ile2) + AMP + diphosphate + H(+)</text>
        <dbReference type="Rhea" id="RHEA:43744"/>
        <dbReference type="Rhea" id="RHEA-COMP:10625"/>
        <dbReference type="Rhea" id="RHEA-COMP:10670"/>
        <dbReference type="ChEBI" id="CHEBI:15378"/>
        <dbReference type="ChEBI" id="CHEBI:30616"/>
        <dbReference type="ChEBI" id="CHEBI:32551"/>
        <dbReference type="ChEBI" id="CHEBI:33019"/>
        <dbReference type="ChEBI" id="CHEBI:82748"/>
        <dbReference type="ChEBI" id="CHEBI:83665"/>
        <dbReference type="ChEBI" id="CHEBI:456215"/>
        <dbReference type="EC" id="6.3.4.19"/>
    </reaction>
</comment>
<comment type="subcellular location">
    <subcellularLocation>
        <location evidence="1">Cytoplasm</location>
    </subcellularLocation>
</comment>
<comment type="domain">
    <text>The N-terminal region contains the highly conserved SGGXDS motif, predicted to be a P-loop motif involved in ATP binding.</text>
</comment>
<comment type="similarity">
    <text evidence="1">Belongs to the tRNA(Ile)-lysidine synthase family.</text>
</comment>
<evidence type="ECO:0000255" key="1">
    <source>
        <dbReference type="HAMAP-Rule" id="MF_01161"/>
    </source>
</evidence>
<organism>
    <name type="scientific">Treponema pallidum subsp. pallidum (strain SS14)</name>
    <dbReference type="NCBI Taxonomy" id="455434"/>
    <lineage>
        <taxon>Bacteria</taxon>
        <taxon>Pseudomonadati</taxon>
        <taxon>Spirochaetota</taxon>
        <taxon>Spirochaetia</taxon>
        <taxon>Spirochaetales</taxon>
        <taxon>Treponemataceae</taxon>
        <taxon>Treponema</taxon>
    </lineage>
</organism>
<protein>
    <recommendedName>
        <fullName evidence="1">tRNA(Ile)-lysidine synthase</fullName>
        <ecNumber evidence="1">6.3.4.19</ecNumber>
    </recommendedName>
    <alternativeName>
        <fullName evidence="1">tRNA(Ile)-2-lysyl-cytidine synthase</fullName>
    </alternativeName>
    <alternativeName>
        <fullName evidence="1">tRNA(Ile)-lysidine synthetase</fullName>
    </alternativeName>
</protein>
<sequence>MSESRQKLHPLLVHVARSFGHFLVPRKPSCLLVAVSGGADSLALLYAAHELAPDFGVCACAVTVDHSLRAQEGALDARFVRALCARFSPPLPCFVQQISAGAVHACAKIRGRGVQDAARALRYKVFDHVAARCGAQVVLTAHTRDDQYETLLMRLFQGAAASALQGIRAARGRYVRPLLKVSRTCVEDFLQTRGVRWREDASNTCRKYVRNRIRHELIPALDAVLAGWRSGLDKTFAGISAEHSFCVAALTRWREGCSHAWEPVPRALGTRLRMPRSDFLAAEFILRFFLLQEACVRLGVSHRVPRGALERCARFDGVRRIHVSGLQLERAGAYVLFSCIHASDTARETKKQDAGSPPSSEKQGVSAIYVARPGAYPCACGTLLVEVRPAGVFVCCAQDHVGVGPFSFPFYIRTHRTGDTISIRGGHKGIRKMFSEWHVPLSDRTVLPMIEQDGVLRALYGAALGYQNRYAERTPHE</sequence>
<reference key="1">
    <citation type="journal article" date="2008" name="BMC Microbiol.">
        <title>Complete genome sequence of Treponema pallidum ssp. pallidum strain SS14 determined with oligonucleotide arrays.</title>
        <authorList>
            <person name="Matejkova P."/>
            <person name="Strouhal M."/>
            <person name="Smajs D."/>
            <person name="Norris S.J."/>
            <person name="Palzkill T."/>
            <person name="Petrosino J.F."/>
            <person name="Sodergren E."/>
            <person name="Norton J.E."/>
            <person name="Singh J."/>
            <person name="Richmond T.A."/>
            <person name="Molla M.N."/>
            <person name="Albert T.J."/>
            <person name="Weinstock G.M."/>
        </authorList>
    </citation>
    <scope>NUCLEOTIDE SEQUENCE [LARGE SCALE GENOMIC DNA]</scope>
    <source>
        <strain>SS14</strain>
    </source>
</reference>